<name>E1A_ADECR</name>
<feature type="chain" id="PRO_0000221701" description="Early E1A protein">
    <location>
        <begin position="1"/>
        <end position="174"/>
    </location>
</feature>
<feature type="zinc finger region" evidence="2">
    <location>
        <begin position="145"/>
        <end position="163"/>
    </location>
</feature>
<feature type="region of interest" description="Interaction with RB1 in competition with E2F1" evidence="1">
    <location>
        <begin position="40"/>
        <end position="48"/>
    </location>
</feature>
<feature type="short sequence motif" description="LXCXE motif, interaction with host RB1" evidence="4">
    <location>
        <begin position="106"/>
        <end position="110"/>
    </location>
</feature>
<dbReference type="EMBL" id="Y07760">
    <property type="protein sequence ID" value="CAA69051.1"/>
    <property type="molecule type" value="Genomic_DNA"/>
</dbReference>
<dbReference type="RefSeq" id="NP_044183.1">
    <property type="nucleotide sequence ID" value="NC_001734.1"/>
</dbReference>
<dbReference type="GeneID" id="1488924"/>
<dbReference type="KEGG" id="vg:1488924"/>
<dbReference type="Proteomes" id="UP000126130">
    <property type="component" value="Segment"/>
</dbReference>
<dbReference type="GO" id="GO:0042025">
    <property type="term" value="C:host cell nucleus"/>
    <property type="evidence" value="ECO:0007669"/>
    <property type="project" value="UniProtKB-SubCell"/>
</dbReference>
<dbReference type="GO" id="GO:0008270">
    <property type="term" value="F:zinc ion binding"/>
    <property type="evidence" value="ECO:0007669"/>
    <property type="project" value="UniProtKB-KW"/>
</dbReference>
<dbReference type="GO" id="GO:0006355">
    <property type="term" value="P:regulation of DNA-templated transcription"/>
    <property type="evidence" value="ECO:0007669"/>
    <property type="project" value="InterPro"/>
</dbReference>
<dbReference type="GO" id="GO:0039645">
    <property type="term" value="P:symbiont-mediated perturbation of host cell cycle G1/S transition checkpoint"/>
    <property type="evidence" value="ECO:0007669"/>
    <property type="project" value="UniProtKB-KW"/>
</dbReference>
<dbReference type="GO" id="GO:0052170">
    <property type="term" value="P:symbiont-mediated suppression of host innate immune response"/>
    <property type="evidence" value="ECO:0007669"/>
    <property type="project" value="UniProtKB-KW"/>
</dbReference>
<dbReference type="GO" id="GO:0039563">
    <property type="term" value="P:symbiont-mediated suppression of host JAK-STAT cascade via inhibition of STAT1 activity"/>
    <property type="evidence" value="ECO:0007669"/>
    <property type="project" value="UniProtKB-KW"/>
</dbReference>
<dbReference type="GO" id="GO:0039502">
    <property type="term" value="P:symbiont-mediated suppression of host type I interferon-mediated signaling pathway"/>
    <property type="evidence" value="ECO:0007669"/>
    <property type="project" value="UniProtKB-KW"/>
</dbReference>
<dbReference type="InterPro" id="IPR014410">
    <property type="entry name" value="Aden_E1A"/>
</dbReference>
<dbReference type="PIRSF" id="PIRSF003669">
    <property type="entry name" value="Aden_E1A"/>
    <property type="match status" value="1"/>
</dbReference>
<organism>
    <name type="scientific">Canine adenovirus serotype 1 (strain RI261)</name>
    <name type="common">CAdV-1</name>
    <name type="synonym">Canine adenovirus 1 (strain RI261)</name>
    <dbReference type="NCBI Taxonomy" id="69151"/>
    <lineage>
        <taxon>Viruses</taxon>
        <taxon>Varidnaviria</taxon>
        <taxon>Bamfordvirae</taxon>
        <taxon>Preplasmiviricota</taxon>
        <taxon>Tectiliviricetes</taxon>
        <taxon>Rowavirales</taxon>
        <taxon>Adenoviridae</taxon>
        <taxon>Mastadenovirus</taxon>
        <taxon>Canine mastadenovirus A</taxon>
    </lineage>
</organism>
<proteinExistence type="inferred from homology"/>
<evidence type="ECO:0000250" key="1"/>
<evidence type="ECO:0000250" key="2">
    <source>
        <dbReference type="UniProtKB" id="P03254"/>
    </source>
</evidence>
<evidence type="ECO:0000250" key="3">
    <source>
        <dbReference type="UniProtKB" id="P03255"/>
    </source>
</evidence>
<evidence type="ECO:0000255" key="4"/>
<evidence type="ECO:0000305" key="5"/>
<comment type="function">
    <text evidence="3">Plays a role in viral genome replication by driving entry of quiescent cells into the cell cycle. Stimulation of progression from G1 to S phase allows the virus to efficiently use the cellular DNA replicating machinery to achieve viral genome replication. E1A protein has both transforming and trans-activating activities. Induces the disassembly of the E2F1 transcription factor from RB1 by direct competition for the same binding site on RB1, with subsequent transcriptional activation of E2F1-regulated S-phase genes and of the E2 region of the adenoviral genome. Release of E2F1 leads to the ARF-mediated inhibition of MDM2 and causes TP53/p53 to accumulate because it is not targeted for degradation by MDM2-mediated ubiquitination anymore. This increase in TP53, in turn, would arrest the cell proliferation and direct its death but this effect is counteracted by the viral protein E1B-55K. Inactivation of the ability of RB1 to arrest the cell cycle is critical for cellular transformation, uncontrolled cellular growth and proliferation induced by viral infection. Interaction with RBX1 and CUL1 inhibits ubiquitination of the proteins targeted by SCF(FBXW7) ubiquitin ligase complex, and may be linked to unregulated host cell proliferation. The tumorigenesis-restraining activity of E1A may be related to the disruption of the host CtBP-CtIP complex through the CtBP binding motif.</text>
</comment>
<comment type="subunit">
    <text evidence="2 3">Interacts with host UBE2I; this interaction interferes with polySUMOylation. Interacts with host RB1; this interaction induces the aberrant dissociation of RB1-E2F1 complex thereby disrupting the activity of RB1 and activating E2F1-regulated genes. Interacts with host ATF7; the interaction enhances ATF7-mediated viral transactivation activity which requires the zinc binding domains of both proteins. Isoform early E1A 32 kDa protein and isoform early E1A 26 kDa protein interact (via N-terminus) with CUL1 and E3 ubiquitin ligase RBX1; these interactions inhibit RBX1-CUL1-dependent elongation reaction of ubiquitin chains and attenuate ubiquitination of SCF(FBXW7) target proteins. Interacts (via PXLXP motif) with host ZMYND11/BS69 (via MYND-type zinc finger); this interaction inhibits E1A mediated transactivation. Interacts with host EP300; this interaction stimulates the acetylation of RB1 by recruiting EP300 and RB1 into a multimeric-protein complex. Interacts with host CTBP1 and CTBP2; this interaction seems to potentiate viral replication. Interacts with host DCAF7. Interacts with host DYRK1A. Interacts with host KPNA4; this interaction allows E1A import into the host nucleus. Interacts with host EP400; this interaction stabilizes MYC. Interacts with host TBP protein; this interaction probably disrupts the TBP-TATA complex.</text>
</comment>
<comment type="subcellular location">
    <subcellularLocation>
        <location evidence="3">Host nucleus</location>
    </subcellularLocation>
</comment>
<comment type="similarity">
    <text evidence="5">Belongs to the adenoviridae E1A protein family.</text>
</comment>
<accession>Q96676</accession>
<organismHost>
    <name type="scientific">Canis lupus familiaris</name>
    <name type="common">Dog</name>
    <name type="synonym">Canis familiaris</name>
    <dbReference type="NCBI Taxonomy" id="9615"/>
</organismHost>
<reference key="1">
    <citation type="journal article" date="1997" name="J. Gen. Virol.">
        <title>Complete DNA sequence of canine adenovirus type 1.</title>
        <authorList>
            <person name="Morrison M.D."/>
            <person name="Onions D.E."/>
            <person name="Nicolson L."/>
        </authorList>
    </citation>
    <scope>NUCLEOTIDE SEQUENCE [LARGE SCALE GENOMIC DNA]</scope>
</reference>
<keyword id="KW-0010">Activator</keyword>
<keyword id="KW-0244">Early protein</keyword>
<keyword id="KW-1078">G1/S host cell cycle checkpoint dysregulation by virus</keyword>
<keyword id="KW-1048">Host nucleus</keyword>
<keyword id="KW-0945">Host-virus interaction</keyword>
<keyword id="KW-1090">Inhibition of host innate immune response by virus</keyword>
<keyword id="KW-1114">Inhibition of host interferon signaling pathway by virus</keyword>
<keyword id="KW-1105">Inhibition of host STAT1 by virus</keyword>
<keyword id="KW-0922">Interferon antiviral system evasion</keyword>
<keyword id="KW-0479">Metal-binding</keyword>
<keyword id="KW-1121">Modulation of host cell cycle by virus</keyword>
<keyword id="KW-0804">Transcription</keyword>
<keyword id="KW-0805">Transcription regulation</keyword>
<keyword id="KW-0899">Viral immunoevasion</keyword>
<keyword id="KW-0862">Zinc</keyword>
<keyword id="KW-0863">Zinc-finger</keyword>
<sequence length="174" mass="19335">MKLTLEPAPRCLHEYVSQLLEDWQPECLSCEYSHGGSSPPSLHDLFDLELENSRSPSPLLCDWCAEADSESTISTETDVGFTLNTPPVSPLPSYSTSPASIPEDMLLCLEEMPTFDDGDEVRSATTSFEHWENNFDPNVGSFFGCLRCAYYQEQGENSICGLCYLKALAEGKIF</sequence>
<protein>
    <recommendedName>
        <fullName>Early E1A protein</fullName>
    </recommendedName>
    <alternativeName>
        <fullName>Early E1A 20 kDa protein</fullName>
    </alternativeName>
</protein>